<gene>
    <name type="ORF">CG4502</name>
</gene>
<accession>Q9VM35</accession>
<comment type="function">
    <text evidence="1">Catalyzes the covalent attachment of ubiquitin to other proteins.</text>
</comment>
<comment type="catalytic activity">
    <reaction evidence="1">
        <text>S-ubiquitinyl-[E1 ubiquitin-activating enzyme]-L-cysteine + [E2 ubiquitin-conjugating enzyme]-L-cysteine = [E1 ubiquitin-activating enzyme]-L-cysteine + S-ubiquitinyl-[E2 ubiquitin-conjugating enzyme]-L-cysteine.</text>
        <dbReference type="EC" id="2.3.2.23"/>
    </reaction>
</comment>
<comment type="pathway">
    <text evidence="1">Protein modification; protein ubiquitination.</text>
</comment>
<comment type="similarity">
    <text evidence="1">Belongs to the ubiquitin-conjugating enzyme family.</text>
</comment>
<name>U2QL1_DROME</name>
<organism>
    <name type="scientific">Drosophila melanogaster</name>
    <name type="common">Fruit fly</name>
    <dbReference type="NCBI Taxonomy" id="7227"/>
    <lineage>
        <taxon>Eukaryota</taxon>
        <taxon>Metazoa</taxon>
        <taxon>Ecdysozoa</taxon>
        <taxon>Arthropoda</taxon>
        <taxon>Hexapoda</taxon>
        <taxon>Insecta</taxon>
        <taxon>Pterygota</taxon>
        <taxon>Neoptera</taxon>
        <taxon>Endopterygota</taxon>
        <taxon>Diptera</taxon>
        <taxon>Brachycera</taxon>
        <taxon>Muscomorpha</taxon>
        <taxon>Ephydroidea</taxon>
        <taxon>Drosophilidae</taxon>
        <taxon>Drosophila</taxon>
        <taxon>Sophophora</taxon>
    </lineage>
</organism>
<reference key="1">
    <citation type="journal article" date="2000" name="Science">
        <title>The genome sequence of Drosophila melanogaster.</title>
        <authorList>
            <person name="Adams M.D."/>
            <person name="Celniker S.E."/>
            <person name="Holt R.A."/>
            <person name="Evans C.A."/>
            <person name="Gocayne J.D."/>
            <person name="Amanatides P.G."/>
            <person name="Scherer S.E."/>
            <person name="Li P.W."/>
            <person name="Hoskins R.A."/>
            <person name="Galle R.F."/>
            <person name="George R.A."/>
            <person name="Lewis S.E."/>
            <person name="Richards S."/>
            <person name="Ashburner M."/>
            <person name="Henderson S.N."/>
            <person name="Sutton G.G."/>
            <person name="Wortman J.R."/>
            <person name="Yandell M.D."/>
            <person name="Zhang Q."/>
            <person name="Chen L.X."/>
            <person name="Brandon R.C."/>
            <person name="Rogers Y.-H.C."/>
            <person name="Blazej R.G."/>
            <person name="Champe M."/>
            <person name="Pfeiffer B.D."/>
            <person name="Wan K.H."/>
            <person name="Doyle C."/>
            <person name="Baxter E.G."/>
            <person name="Helt G."/>
            <person name="Nelson C.R."/>
            <person name="Miklos G.L.G."/>
            <person name="Abril J.F."/>
            <person name="Agbayani A."/>
            <person name="An H.-J."/>
            <person name="Andrews-Pfannkoch C."/>
            <person name="Baldwin D."/>
            <person name="Ballew R.M."/>
            <person name="Basu A."/>
            <person name="Baxendale J."/>
            <person name="Bayraktaroglu L."/>
            <person name="Beasley E.M."/>
            <person name="Beeson K.Y."/>
            <person name="Benos P.V."/>
            <person name="Berman B.P."/>
            <person name="Bhandari D."/>
            <person name="Bolshakov S."/>
            <person name="Borkova D."/>
            <person name="Botchan M.R."/>
            <person name="Bouck J."/>
            <person name="Brokstein P."/>
            <person name="Brottier P."/>
            <person name="Burtis K.C."/>
            <person name="Busam D.A."/>
            <person name="Butler H."/>
            <person name="Cadieu E."/>
            <person name="Center A."/>
            <person name="Chandra I."/>
            <person name="Cherry J.M."/>
            <person name="Cawley S."/>
            <person name="Dahlke C."/>
            <person name="Davenport L.B."/>
            <person name="Davies P."/>
            <person name="de Pablos B."/>
            <person name="Delcher A."/>
            <person name="Deng Z."/>
            <person name="Mays A.D."/>
            <person name="Dew I."/>
            <person name="Dietz S.M."/>
            <person name="Dodson K."/>
            <person name="Doup L.E."/>
            <person name="Downes M."/>
            <person name="Dugan-Rocha S."/>
            <person name="Dunkov B.C."/>
            <person name="Dunn P."/>
            <person name="Durbin K.J."/>
            <person name="Evangelista C.C."/>
            <person name="Ferraz C."/>
            <person name="Ferriera S."/>
            <person name="Fleischmann W."/>
            <person name="Fosler C."/>
            <person name="Gabrielian A.E."/>
            <person name="Garg N.S."/>
            <person name="Gelbart W.M."/>
            <person name="Glasser K."/>
            <person name="Glodek A."/>
            <person name="Gong F."/>
            <person name="Gorrell J.H."/>
            <person name="Gu Z."/>
            <person name="Guan P."/>
            <person name="Harris M."/>
            <person name="Harris N.L."/>
            <person name="Harvey D.A."/>
            <person name="Heiman T.J."/>
            <person name="Hernandez J.R."/>
            <person name="Houck J."/>
            <person name="Hostin D."/>
            <person name="Houston K.A."/>
            <person name="Howland T.J."/>
            <person name="Wei M.-H."/>
            <person name="Ibegwam C."/>
            <person name="Jalali M."/>
            <person name="Kalush F."/>
            <person name="Karpen G.H."/>
            <person name="Ke Z."/>
            <person name="Kennison J.A."/>
            <person name="Ketchum K.A."/>
            <person name="Kimmel B.E."/>
            <person name="Kodira C.D."/>
            <person name="Kraft C.L."/>
            <person name="Kravitz S."/>
            <person name="Kulp D."/>
            <person name="Lai Z."/>
            <person name="Lasko P."/>
            <person name="Lei Y."/>
            <person name="Levitsky A.A."/>
            <person name="Li J.H."/>
            <person name="Li Z."/>
            <person name="Liang Y."/>
            <person name="Lin X."/>
            <person name="Liu X."/>
            <person name="Mattei B."/>
            <person name="McIntosh T.C."/>
            <person name="McLeod M.P."/>
            <person name="McPherson D."/>
            <person name="Merkulov G."/>
            <person name="Milshina N.V."/>
            <person name="Mobarry C."/>
            <person name="Morris J."/>
            <person name="Moshrefi A."/>
            <person name="Mount S.M."/>
            <person name="Moy M."/>
            <person name="Murphy B."/>
            <person name="Murphy L."/>
            <person name="Muzny D.M."/>
            <person name="Nelson D.L."/>
            <person name="Nelson D.R."/>
            <person name="Nelson K.A."/>
            <person name="Nixon K."/>
            <person name="Nusskern D.R."/>
            <person name="Pacleb J.M."/>
            <person name="Palazzolo M."/>
            <person name="Pittman G.S."/>
            <person name="Pan S."/>
            <person name="Pollard J."/>
            <person name="Puri V."/>
            <person name="Reese M.G."/>
            <person name="Reinert K."/>
            <person name="Remington K."/>
            <person name="Saunders R.D.C."/>
            <person name="Scheeler F."/>
            <person name="Shen H."/>
            <person name="Shue B.C."/>
            <person name="Siden-Kiamos I."/>
            <person name="Simpson M."/>
            <person name="Skupski M.P."/>
            <person name="Smith T.J."/>
            <person name="Spier E."/>
            <person name="Spradling A.C."/>
            <person name="Stapleton M."/>
            <person name="Strong R."/>
            <person name="Sun E."/>
            <person name="Svirskas R."/>
            <person name="Tector C."/>
            <person name="Turner R."/>
            <person name="Venter E."/>
            <person name="Wang A.H."/>
            <person name="Wang X."/>
            <person name="Wang Z.-Y."/>
            <person name="Wassarman D.A."/>
            <person name="Weinstock G.M."/>
            <person name="Weissenbach J."/>
            <person name="Williams S.M."/>
            <person name="Woodage T."/>
            <person name="Worley K.C."/>
            <person name="Wu D."/>
            <person name="Yang S."/>
            <person name="Yao Q.A."/>
            <person name="Ye J."/>
            <person name="Yeh R.-F."/>
            <person name="Zaveri J.S."/>
            <person name="Zhan M."/>
            <person name="Zhang G."/>
            <person name="Zhao Q."/>
            <person name="Zheng L."/>
            <person name="Zheng X.H."/>
            <person name="Zhong F.N."/>
            <person name="Zhong W."/>
            <person name="Zhou X."/>
            <person name="Zhu S.C."/>
            <person name="Zhu X."/>
            <person name="Smith H.O."/>
            <person name="Gibbs R.A."/>
            <person name="Myers E.W."/>
            <person name="Rubin G.M."/>
            <person name="Venter J.C."/>
        </authorList>
    </citation>
    <scope>NUCLEOTIDE SEQUENCE [LARGE SCALE GENOMIC DNA]</scope>
    <source>
        <strain>Berkeley</strain>
    </source>
</reference>
<reference key="2">
    <citation type="journal article" date="2002" name="Genome Biol.">
        <title>Annotation of the Drosophila melanogaster euchromatic genome: a systematic review.</title>
        <authorList>
            <person name="Misra S."/>
            <person name="Crosby M.A."/>
            <person name="Mungall C.J."/>
            <person name="Matthews B.B."/>
            <person name="Campbell K.S."/>
            <person name="Hradecky P."/>
            <person name="Huang Y."/>
            <person name="Kaminker J.S."/>
            <person name="Millburn G.H."/>
            <person name="Prochnik S.E."/>
            <person name="Smith C.D."/>
            <person name="Tupy J.L."/>
            <person name="Whitfield E.J."/>
            <person name="Bayraktaroglu L."/>
            <person name="Berman B.P."/>
            <person name="Bettencourt B.R."/>
            <person name="Celniker S.E."/>
            <person name="de Grey A.D.N.J."/>
            <person name="Drysdale R.A."/>
            <person name="Harris N.L."/>
            <person name="Richter J."/>
            <person name="Russo S."/>
            <person name="Schroeder A.J."/>
            <person name="Shu S.Q."/>
            <person name="Stapleton M."/>
            <person name="Yamada C."/>
            <person name="Ashburner M."/>
            <person name="Gelbart W.M."/>
            <person name="Rubin G.M."/>
            <person name="Lewis S.E."/>
        </authorList>
    </citation>
    <scope>GENOME REANNOTATION</scope>
    <source>
        <strain>Berkeley</strain>
    </source>
</reference>
<reference key="3">
    <citation type="journal article" date="2002" name="Genome Biol.">
        <title>A Drosophila full-length cDNA resource.</title>
        <authorList>
            <person name="Stapleton M."/>
            <person name="Carlson J.W."/>
            <person name="Brokstein P."/>
            <person name="Yu C."/>
            <person name="Champe M."/>
            <person name="George R.A."/>
            <person name="Guarin H."/>
            <person name="Kronmiller B."/>
            <person name="Pacleb J.M."/>
            <person name="Park S."/>
            <person name="Wan K.H."/>
            <person name="Rubin G.M."/>
            <person name="Celniker S.E."/>
        </authorList>
    </citation>
    <scope>NUCLEOTIDE SEQUENCE [LARGE SCALE MRNA]</scope>
    <source>
        <strain>Berkeley</strain>
        <tissue>Embryo</tissue>
    </source>
</reference>
<protein>
    <recommendedName>
        <fullName>Ubiquitin-conjugating enzyme E2Q-like protein CG4502</fullName>
        <ecNumber>2.3.2.23</ecNumber>
    </recommendedName>
    <alternativeName>
        <fullName>E2Q-like ubiquitin-conjugating enzyme CG4502</fullName>
    </alternativeName>
</protein>
<sequence>MSSRSKERVVTAFRKIFHKSSNNNNNNNNNHNNNINNNNNNDKVDGATGSSPNINNNNNNNNNNNNHDGAAAPSSAGGVAVAGGAVGSSGSSGAAKNAVVRMAAEQAVWDSPGKRRRQDHKVAPTTERQLVAAPDHTIRTRRLMKEYREMERLQAKNDAVFTVELVNDSLFEWHVRLHVIDPDSPLARDMAEMGVPAILLHLSFPDNFPFAPPFMRVVEPHIEKGYVMEGGAICMELLTPRGWASAYTVEAVIMQFAASVVKGQGRIARKPKSTKEFTRRQAEESFRSLVKTHEKYGWVTPALSDG</sequence>
<dbReference type="EC" id="2.3.2.23"/>
<dbReference type="EMBL" id="AE014134">
    <property type="protein sequence ID" value="AAF52492.1"/>
    <property type="molecule type" value="Genomic_DNA"/>
</dbReference>
<dbReference type="EMBL" id="AE014134">
    <property type="protein sequence ID" value="AAF52493.1"/>
    <property type="molecule type" value="Genomic_DNA"/>
</dbReference>
<dbReference type="EMBL" id="AY060422">
    <property type="protein sequence ID" value="AAL25461.1"/>
    <property type="molecule type" value="mRNA"/>
</dbReference>
<dbReference type="RefSeq" id="NP_609103.1">
    <property type="nucleotide sequence ID" value="NM_135259.3"/>
</dbReference>
<dbReference type="RefSeq" id="NP_723260.1">
    <property type="nucleotide sequence ID" value="NM_164741.2"/>
</dbReference>
<dbReference type="SMR" id="Q9VM35"/>
<dbReference type="BioGRID" id="60148">
    <property type="interactions" value="2"/>
</dbReference>
<dbReference type="FunCoup" id="Q9VM35">
    <property type="interactions" value="1001"/>
</dbReference>
<dbReference type="IntAct" id="Q9VM35">
    <property type="interactions" value="2"/>
</dbReference>
<dbReference type="STRING" id="7227.FBpp0079045"/>
<dbReference type="GlyGen" id="Q9VM35">
    <property type="glycosylation" value="1 site"/>
</dbReference>
<dbReference type="PaxDb" id="7227-FBpp0079044"/>
<dbReference type="EnsemblMetazoa" id="FBtr0079416">
    <property type="protein sequence ID" value="FBpp0079044"/>
    <property type="gene ID" value="FBgn0031896"/>
</dbReference>
<dbReference type="EnsemblMetazoa" id="FBtr0079417">
    <property type="protein sequence ID" value="FBpp0079045"/>
    <property type="gene ID" value="FBgn0031896"/>
</dbReference>
<dbReference type="GeneID" id="34002"/>
<dbReference type="KEGG" id="dme:Dmel_CG4502"/>
<dbReference type="UCSC" id="CG4502-RA">
    <property type="organism name" value="d. melanogaster"/>
</dbReference>
<dbReference type="AGR" id="FB:FBgn0031896"/>
<dbReference type="FlyBase" id="FBgn0031896">
    <property type="gene designation" value="CG4502"/>
</dbReference>
<dbReference type="VEuPathDB" id="VectorBase:FBgn0031896"/>
<dbReference type="eggNOG" id="KOG0897">
    <property type="taxonomic scope" value="Eukaryota"/>
</dbReference>
<dbReference type="GeneTree" id="ENSGT00940000161612"/>
<dbReference type="HOGENOM" id="CLU_053863_1_0_1"/>
<dbReference type="InParanoid" id="Q9VM35"/>
<dbReference type="OMA" id="MERLQCK"/>
<dbReference type="OrthoDB" id="109543at2759"/>
<dbReference type="PhylomeDB" id="Q9VM35"/>
<dbReference type="UniPathway" id="UPA00143"/>
<dbReference type="BioGRID-ORCS" id="34002">
    <property type="hits" value="0 hits in 1 CRISPR screen"/>
</dbReference>
<dbReference type="ChiTaRS" id="CG4502">
    <property type="organism name" value="fly"/>
</dbReference>
<dbReference type="GenomeRNAi" id="34002"/>
<dbReference type="PRO" id="PR:Q9VM35"/>
<dbReference type="Proteomes" id="UP000000803">
    <property type="component" value="Chromosome 2L"/>
</dbReference>
<dbReference type="Bgee" id="FBgn0031896">
    <property type="expression patterns" value="Expressed in spermatocyte in testis and 258 other cell types or tissues"/>
</dbReference>
<dbReference type="GO" id="GO:0005634">
    <property type="term" value="C:nucleus"/>
    <property type="evidence" value="ECO:0000318"/>
    <property type="project" value="GO_Central"/>
</dbReference>
<dbReference type="GO" id="GO:0005524">
    <property type="term" value="F:ATP binding"/>
    <property type="evidence" value="ECO:0007669"/>
    <property type="project" value="UniProtKB-KW"/>
</dbReference>
<dbReference type="GO" id="GO:0061631">
    <property type="term" value="F:ubiquitin conjugating enzyme activity"/>
    <property type="evidence" value="ECO:0000318"/>
    <property type="project" value="GO_Central"/>
</dbReference>
<dbReference type="GO" id="GO:0000209">
    <property type="term" value="P:protein polyubiquitination"/>
    <property type="evidence" value="ECO:0000318"/>
    <property type="project" value="GO_Central"/>
</dbReference>
<dbReference type="CDD" id="cd23802">
    <property type="entry name" value="UBCc_UBE2Q"/>
    <property type="match status" value="1"/>
</dbReference>
<dbReference type="FunFam" id="3.10.110.10:FF:000036">
    <property type="entry name" value="ubiquitin-conjugating enzyme E2Q-like protein 1"/>
    <property type="match status" value="1"/>
</dbReference>
<dbReference type="Gene3D" id="3.10.110.10">
    <property type="entry name" value="Ubiquitin Conjugating Enzyme"/>
    <property type="match status" value="1"/>
</dbReference>
<dbReference type="InterPro" id="IPR000608">
    <property type="entry name" value="UBQ-conjugat_E2_core"/>
</dbReference>
<dbReference type="InterPro" id="IPR016135">
    <property type="entry name" value="UBQ-conjugating_enzyme/RWD"/>
</dbReference>
<dbReference type="PANTHER" id="PTHR16148:SF14">
    <property type="entry name" value="MYND-TYPE DOMAIN-CONTAINING PROTEIN"/>
    <property type="match status" value="1"/>
</dbReference>
<dbReference type="PANTHER" id="PTHR16148">
    <property type="entry name" value="NF-KAPPA-B-REPRESSING FACTOR-RELATED"/>
    <property type="match status" value="1"/>
</dbReference>
<dbReference type="Pfam" id="PF00179">
    <property type="entry name" value="UQ_con"/>
    <property type="match status" value="1"/>
</dbReference>
<dbReference type="SMART" id="SM00212">
    <property type="entry name" value="UBCc"/>
    <property type="match status" value="1"/>
</dbReference>
<dbReference type="SUPFAM" id="SSF54495">
    <property type="entry name" value="UBC-like"/>
    <property type="match status" value="1"/>
</dbReference>
<dbReference type="PROSITE" id="PS50127">
    <property type="entry name" value="UBC_2"/>
    <property type="match status" value="1"/>
</dbReference>
<keyword id="KW-0067">ATP-binding</keyword>
<keyword id="KW-0547">Nucleotide-binding</keyword>
<keyword id="KW-1185">Reference proteome</keyword>
<keyword id="KW-0808">Transferase</keyword>
<keyword id="KW-0833">Ubl conjugation pathway</keyword>
<proteinExistence type="evidence at transcript level"/>
<evidence type="ECO:0000255" key="1">
    <source>
        <dbReference type="PROSITE-ProRule" id="PRU00388"/>
    </source>
</evidence>
<evidence type="ECO:0000256" key="2">
    <source>
        <dbReference type="SAM" id="MobiDB-lite"/>
    </source>
</evidence>
<feature type="chain" id="PRO_0000335813" description="Ubiquitin-conjugating enzyme E2Q-like protein CG4502">
    <location>
        <begin position="1"/>
        <end position="306"/>
    </location>
</feature>
<feature type="domain" description="UBC core" evidence="1">
    <location>
        <begin position="138"/>
        <end position="299"/>
    </location>
</feature>
<feature type="region of interest" description="Disordered" evidence="2">
    <location>
        <begin position="18"/>
        <end position="77"/>
    </location>
</feature>
<feature type="compositionally biased region" description="Low complexity" evidence="2">
    <location>
        <begin position="22"/>
        <end position="41"/>
    </location>
</feature>
<feature type="compositionally biased region" description="Low complexity" evidence="2">
    <location>
        <begin position="53"/>
        <end position="77"/>
    </location>
</feature>
<feature type="active site" description="Glycyl thioester intermediate" evidence="1">
    <location>
        <position position="234"/>
    </location>
</feature>